<protein>
    <recommendedName>
        <fullName>Hydrogenase expression/formation protein HupG</fullName>
    </recommendedName>
</protein>
<name>HUPG_BRADU</name>
<feature type="chain" id="PRO_0000201411" description="Hydrogenase expression/formation protein HupG">
    <location>
        <begin position="1"/>
        <end position="148"/>
    </location>
</feature>
<feature type="sequence conflict" description="In Ref. 2; CAA79946." evidence="1" ref="2">
    <original>D</original>
    <variation>E</variation>
    <location>
        <position position="24"/>
    </location>
</feature>
<feature type="sequence conflict" description="In Ref. 2; CAA79946." evidence="1" ref="2">
    <original>A</original>
    <variation>T</variation>
    <location>
        <position position="30"/>
    </location>
</feature>
<feature type="sequence conflict" description="In Ref. 1; AAA50822." evidence="1" ref="1">
    <original>V</original>
    <variation>D</variation>
    <location>
        <position position="135"/>
    </location>
</feature>
<accession>P48339</accession>
<accession>Q45253</accession>
<proteinExistence type="inferred from homology"/>
<organism>
    <name type="scientific">Bradyrhizobium diazoefficiens (strain JCM 10833 / BCRC 13528 / IAM 13628 / NBRC 14792 / USDA 110)</name>
    <dbReference type="NCBI Taxonomy" id="224911"/>
    <lineage>
        <taxon>Bacteria</taxon>
        <taxon>Pseudomonadati</taxon>
        <taxon>Pseudomonadota</taxon>
        <taxon>Alphaproteobacteria</taxon>
        <taxon>Hyphomicrobiales</taxon>
        <taxon>Nitrobacteraceae</taxon>
        <taxon>Bradyrhizobium</taxon>
    </lineage>
</organism>
<keyword id="KW-1185">Reference proteome</keyword>
<evidence type="ECO:0000305" key="1"/>
<gene>
    <name type="primary">hupG</name>
    <name type="ordered locus">bll6937</name>
</gene>
<comment type="similarity">
    <text evidence="1">Belongs to the HupG/HyaE family.</text>
</comment>
<reference key="1">
    <citation type="journal article" date="1994" name="Gene">
        <title>Organization of the hydrogenase gene cluster from Bradyrhizobium japonicum: sequences and analysis of five more hydrogenase-related genes.</title>
        <authorList>
            <person name="Fu C."/>
            <person name="Maier R.J."/>
        </authorList>
    </citation>
    <scope>NUCLEOTIDE SEQUENCE [GENOMIC DNA]</scope>
    <source>
        <strain>JCM 10833 / BCRC 13528 / IAM 13628 / NBRC 14792 / USDA 110</strain>
    </source>
</reference>
<reference key="2">
    <citation type="journal article" date="1993" name="J. Mol. Biol.">
        <title>Nucleotide sequence analysis of four genes, hupC, hupD, hupF and hupG, downstream of the hydrogenase structural genes in Bradyrhizobium japonicum.</title>
        <authorList>
            <person name="van Soom C."/>
            <person name="Browaeys J."/>
            <person name="Verreth C."/>
            <person name="Vanderleyden J."/>
        </authorList>
    </citation>
    <scope>NUCLEOTIDE SEQUENCE [GENOMIC DNA]</scope>
</reference>
<reference key="3">
    <citation type="journal article" date="2002" name="DNA Res.">
        <title>Complete genomic sequence of nitrogen-fixing symbiotic bacterium Bradyrhizobium japonicum USDA110.</title>
        <authorList>
            <person name="Kaneko T."/>
            <person name="Nakamura Y."/>
            <person name="Sato S."/>
            <person name="Minamisawa K."/>
            <person name="Uchiumi T."/>
            <person name="Sasamoto S."/>
            <person name="Watanabe A."/>
            <person name="Idesawa K."/>
            <person name="Iriguchi M."/>
            <person name="Kawashima K."/>
            <person name="Kohara M."/>
            <person name="Matsumoto M."/>
            <person name="Shimpo S."/>
            <person name="Tsuruoka H."/>
            <person name="Wada T."/>
            <person name="Yamada M."/>
            <person name="Tabata S."/>
        </authorList>
    </citation>
    <scope>NUCLEOTIDE SEQUENCE [LARGE SCALE GENOMIC DNA]</scope>
    <source>
        <strain>JCM 10833 / BCRC 13528 / IAM 13628 / NBRC 14792 / USDA 110</strain>
    </source>
</reference>
<sequence>MEFQVGKHDLTRHGLNEVDAATVDHFLGAADEAGAIAVLLSAGDPNRFPEATDVAVVLPELIAAFGGRLRGAVIARGDESALGQRFGVRVQPTLIFVAKGETLGLIAKIQDWSVYVDRITKLIDRPRGQSAAVAVTIVPQHRTQGVEL</sequence>
<dbReference type="EMBL" id="L25760">
    <property type="protein sequence ID" value="AAA50822.1"/>
    <property type="molecule type" value="Genomic_DNA"/>
</dbReference>
<dbReference type="EMBL" id="Z21948">
    <property type="protein sequence ID" value="CAA79946.1"/>
    <property type="molecule type" value="Genomic_DNA"/>
</dbReference>
<dbReference type="EMBL" id="BA000040">
    <property type="protein sequence ID" value="BAC52202.1"/>
    <property type="molecule type" value="Genomic_DNA"/>
</dbReference>
<dbReference type="PIR" id="S39403">
    <property type="entry name" value="S39403"/>
</dbReference>
<dbReference type="RefSeq" id="NP_773577.1">
    <property type="nucleotide sequence ID" value="NC_004463.1"/>
</dbReference>
<dbReference type="RefSeq" id="WP_011089675.1">
    <property type="nucleotide sequence ID" value="NC_004463.1"/>
</dbReference>
<dbReference type="SMR" id="P48339"/>
<dbReference type="FunCoup" id="P48339">
    <property type="interactions" value="52"/>
</dbReference>
<dbReference type="STRING" id="224911.AAV28_32275"/>
<dbReference type="EnsemblBacteria" id="BAC52202">
    <property type="protein sequence ID" value="BAC52202"/>
    <property type="gene ID" value="BAC52202"/>
</dbReference>
<dbReference type="GeneID" id="46493903"/>
<dbReference type="KEGG" id="bja:bll6937"/>
<dbReference type="PATRIC" id="fig|224911.44.peg.6971"/>
<dbReference type="eggNOG" id="COG3118">
    <property type="taxonomic scope" value="Bacteria"/>
</dbReference>
<dbReference type="HOGENOM" id="CLU_144855_0_0_5"/>
<dbReference type="InParanoid" id="P48339"/>
<dbReference type="OrthoDB" id="6560050at2"/>
<dbReference type="PhylomeDB" id="P48339"/>
<dbReference type="Proteomes" id="UP000002526">
    <property type="component" value="Chromosome"/>
</dbReference>
<dbReference type="CDD" id="cd02965">
    <property type="entry name" value="HyaE"/>
    <property type="match status" value="1"/>
</dbReference>
<dbReference type="Gene3D" id="3.40.30.10">
    <property type="entry name" value="Glutaredoxin"/>
    <property type="match status" value="1"/>
</dbReference>
<dbReference type="Gene3D" id="1.20.5.510">
    <property type="entry name" value="Single helix bin"/>
    <property type="match status" value="1"/>
</dbReference>
<dbReference type="InterPro" id="IPR010893">
    <property type="entry name" value="NiFe-hyd_mat_HyaE"/>
</dbReference>
<dbReference type="InterPro" id="IPR036249">
    <property type="entry name" value="Thioredoxin-like_sf"/>
</dbReference>
<dbReference type="Pfam" id="PF07449">
    <property type="entry name" value="HyaE"/>
    <property type="match status" value="1"/>
</dbReference>
<dbReference type="PIRSF" id="PIRSF038934">
    <property type="entry name" value="HyaE_HupG"/>
    <property type="match status" value="1"/>
</dbReference>
<dbReference type="SUPFAM" id="SSF52833">
    <property type="entry name" value="Thioredoxin-like"/>
    <property type="match status" value="1"/>
</dbReference>